<feature type="chain" id="PRO_1000190025" description="Methionyl-tRNA formyltransferase">
    <location>
        <begin position="1"/>
        <end position="315"/>
    </location>
</feature>
<feature type="binding site" evidence="1">
    <location>
        <begin position="113"/>
        <end position="116"/>
    </location>
    <ligand>
        <name>(6S)-5,6,7,8-tetrahydrofolate</name>
        <dbReference type="ChEBI" id="CHEBI:57453"/>
    </ligand>
</feature>
<comment type="function">
    <text evidence="1">Attaches a formyl group to the free amino group of methionyl-tRNA(fMet). The formyl group appears to play a dual role in the initiator identity of N-formylmethionyl-tRNA by promoting its recognition by IF2 and preventing the misappropriation of this tRNA by the elongation apparatus.</text>
</comment>
<comment type="catalytic activity">
    <reaction evidence="1">
        <text>L-methionyl-tRNA(fMet) + (6R)-10-formyltetrahydrofolate = N-formyl-L-methionyl-tRNA(fMet) + (6S)-5,6,7,8-tetrahydrofolate + H(+)</text>
        <dbReference type="Rhea" id="RHEA:24380"/>
        <dbReference type="Rhea" id="RHEA-COMP:9952"/>
        <dbReference type="Rhea" id="RHEA-COMP:9953"/>
        <dbReference type="ChEBI" id="CHEBI:15378"/>
        <dbReference type="ChEBI" id="CHEBI:57453"/>
        <dbReference type="ChEBI" id="CHEBI:78530"/>
        <dbReference type="ChEBI" id="CHEBI:78844"/>
        <dbReference type="ChEBI" id="CHEBI:195366"/>
        <dbReference type="EC" id="2.1.2.9"/>
    </reaction>
</comment>
<comment type="similarity">
    <text evidence="1">Belongs to the Fmt family.</text>
</comment>
<gene>
    <name evidence="1" type="primary">fmt</name>
    <name type="ordered locus">ECED1_3951</name>
</gene>
<keyword id="KW-0648">Protein biosynthesis</keyword>
<keyword id="KW-0808">Transferase</keyword>
<protein>
    <recommendedName>
        <fullName evidence="1">Methionyl-tRNA formyltransferase</fullName>
        <ecNumber evidence="1">2.1.2.9</ecNumber>
    </recommendedName>
</protein>
<evidence type="ECO:0000255" key="1">
    <source>
        <dbReference type="HAMAP-Rule" id="MF_00182"/>
    </source>
</evidence>
<dbReference type="EC" id="2.1.2.9" evidence="1"/>
<dbReference type="EMBL" id="CU928162">
    <property type="protein sequence ID" value="CAR10090.2"/>
    <property type="molecule type" value="Genomic_DNA"/>
</dbReference>
<dbReference type="RefSeq" id="WP_000004421.1">
    <property type="nucleotide sequence ID" value="NC_011745.1"/>
</dbReference>
<dbReference type="SMR" id="B7N172"/>
<dbReference type="KEGG" id="ecq:ECED1_3951"/>
<dbReference type="HOGENOM" id="CLU_033347_1_2_6"/>
<dbReference type="Proteomes" id="UP000000748">
    <property type="component" value="Chromosome"/>
</dbReference>
<dbReference type="GO" id="GO:0005829">
    <property type="term" value="C:cytosol"/>
    <property type="evidence" value="ECO:0007669"/>
    <property type="project" value="TreeGrafter"/>
</dbReference>
<dbReference type="GO" id="GO:0004479">
    <property type="term" value="F:methionyl-tRNA formyltransferase activity"/>
    <property type="evidence" value="ECO:0007669"/>
    <property type="project" value="UniProtKB-UniRule"/>
</dbReference>
<dbReference type="CDD" id="cd08646">
    <property type="entry name" value="FMT_core_Met-tRNA-FMT_N"/>
    <property type="match status" value="1"/>
</dbReference>
<dbReference type="CDD" id="cd08704">
    <property type="entry name" value="Met_tRNA_FMT_C"/>
    <property type="match status" value="1"/>
</dbReference>
<dbReference type="FunFam" id="3.10.25.10:FF:000001">
    <property type="entry name" value="Methionyl-tRNA formyltransferase"/>
    <property type="match status" value="1"/>
</dbReference>
<dbReference type="FunFam" id="3.40.50.12230:FF:000001">
    <property type="entry name" value="Methionyl-tRNA formyltransferase"/>
    <property type="match status" value="1"/>
</dbReference>
<dbReference type="FunFam" id="3.40.50.170:FF:000003">
    <property type="entry name" value="Methionyl-tRNA formyltransferase"/>
    <property type="match status" value="1"/>
</dbReference>
<dbReference type="Gene3D" id="3.10.25.10">
    <property type="entry name" value="Formyl transferase, C-terminal domain"/>
    <property type="match status" value="1"/>
</dbReference>
<dbReference type="Gene3D" id="3.40.50.170">
    <property type="entry name" value="Formyl transferase, N-terminal domain"/>
    <property type="match status" value="1"/>
</dbReference>
<dbReference type="HAMAP" id="MF_00182">
    <property type="entry name" value="Formyl_trans"/>
    <property type="match status" value="1"/>
</dbReference>
<dbReference type="InterPro" id="IPR005794">
    <property type="entry name" value="Fmt"/>
</dbReference>
<dbReference type="InterPro" id="IPR005793">
    <property type="entry name" value="Formyl_trans_C"/>
</dbReference>
<dbReference type="InterPro" id="IPR037022">
    <property type="entry name" value="Formyl_trans_C_sf"/>
</dbReference>
<dbReference type="InterPro" id="IPR002376">
    <property type="entry name" value="Formyl_transf_N"/>
</dbReference>
<dbReference type="InterPro" id="IPR036477">
    <property type="entry name" value="Formyl_transf_N_sf"/>
</dbReference>
<dbReference type="InterPro" id="IPR011034">
    <property type="entry name" value="Formyl_transferase-like_C_sf"/>
</dbReference>
<dbReference type="InterPro" id="IPR001555">
    <property type="entry name" value="GART_AS"/>
</dbReference>
<dbReference type="InterPro" id="IPR044135">
    <property type="entry name" value="Met-tRNA-FMT_C"/>
</dbReference>
<dbReference type="InterPro" id="IPR041711">
    <property type="entry name" value="Met-tRNA-FMT_N"/>
</dbReference>
<dbReference type="NCBIfam" id="TIGR00460">
    <property type="entry name" value="fmt"/>
    <property type="match status" value="1"/>
</dbReference>
<dbReference type="PANTHER" id="PTHR11138">
    <property type="entry name" value="METHIONYL-TRNA FORMYLTRANSFERASE"/>
    <property type="match status" value="1"/>
</dbReference>
<dbReference type="PANTHER" id="PTHR11138:SF5">
    <property type="entry name" value="METHIONYL-TRNA FORMYLTRANSFERASE, MITOCHONDRIAL"/>
    <property type="match status" value="1"/>
</dbReference>
<dbReference type="Pfam" id="PF02911">
    <property type="entry name" value="Formyl_trans_C"/>
    <property type="match status" value="1"/>
</dbReference>
<dbReference type="Pfam" id="PF00551">
    <property type="entry name" value="Formyl_trans_N"/>
    <property type="match status" value="1"/>
</dbReference>
<dbReference type="SUPFAM" id="SSF50486">
    <property type="entry name" value="FMT C-terminal domain-like"/>
    <property type="match status" value="1"/>
</dbReference>
<dbReference type="SUPFAM" id="SSF53328">
    <property type="entry name" value="Formyltransferase"/>
    <property type="match status" value="1"/>
</dbReference>
<dbReference type="PROSITE" id="PS00373">
    <property type="entry name" value="GART"/>
    <property type="match status" value="1"/>
</dbReference>
<sequence length="315" mass="34217">MSESLRIIFAGTPDFAARHLDALLSSGHNIVGVFTQPDRPAGRGKKLMPSPVKVLAEDKGLPVFQPVSLRPQENQQLVADLQADVMVVVAYGLILPKAVLEMPRLGCINVHGSLLPRWRGAAPIQRSLWAGDAETGVTIMQMDVGLDTGDMLYKLSCPITAEDTSGTLYDKLAELGPQGLITTLKQLADGTAKPEVQDETLVTYAEKLSKEEARIDWSLSAAQLERCIRAFNPWPMSWLEIEGQPVKVWKASVIDTTTKAAPGTILEANKQGIQVATGDGILNLLSMQPAGKKAMSVQDLLNSRREWFVPGNRLA</sequence>
<name>FMT_ECO81</name>
<accession>B7N172</accession>
<proteinExistence type="inferred from homology"/>
<reference key="1">
    <citation type="journal article" date="2009" name="PLoS Genet.">
        <title>Organised genome dynamics in the Escherichia coli species results in highly diverse adaptive paths.</title>
        <authorList>
            <person name="Touchon M."/>
            <person name="Hoede C."/>
            <person name="Tenaillon O."/>
            <person name="Barbe V."/>
            <person name="Baeriswyl S."/>
            <person name="Bidet P."/>
            <person name="Bingen E."/>
            <person name="Bonacorsi S."/>
            <person name="Bouchier C."/>
            <person name="Bouvet O."/>
            <person name="Calteau A."/>
            <person name="Chiapello H."/>
            <person name="Clermont O."/>
            <person name="Cruveiller S."/>
            <person name="Danchin A."/>
            <person name="Diard M."/>
            <person name="Dossat C."/>
            <person name="Karoui M.E."/>
            <person name="Frapy E."/>
            <person name="Garry L."/>
            <person name="Ghigo J.M."/>
            <person name="Gilles A.M."/>
            <person name="Johnson J."/>
            <person name="Le Bouguenec C."/>
            <person name="Lescat M."/>
            <person name="Mangenot S."/>
            <person name="Martinez-Jehanne V."/>
            <person name="Matic I."/>
            <person name="Nassif X."/>
            <person name="Oztas S."/>
            <person name="Petit M.A."/>
            <person name="Pichon C."/>
            <person name="Rouy Z."/>
            <person name="Ruf C.S."/>
            <person name="Schneider D."/>
            <person name="Tourret J."/>
            <person name="Vacherie B."/>
            <person name="Vallenet D."/>
            <person name="Medigue C."/>
            <person name="Rocha E.P.C."/>
            <person name="Denamur E."/>
        </authorList>
    </citation>
    <scope>NUCLEOTIDE SEQUENCE [LARGE SCALE GENOMIC DNA]</scope>
    <source>
        <strain>ED1a</strain>
    </source>
</reference>
<organism>
    <name type="scientific">Escherichia coli O81 (strain ED1a)</name>
    <dbReference type="NCBI Taxonomy" id="585397"/>
    <lineage>
        <taxon>Bacteria</taxon>
        <taxon>Pseudomonadati</taxon>
        <taxon>Pseudomonadota</taxon>
        <taxon>Gammaproteobacteria</taxon>
        <taxon>Enterobacterales</taxon>
        <taxon>Enterobacteriaceae</taxon>
        <taxon>Escherichia</taxon>
    </lineage>
</organism>